<dbReference type="EC" id="6.3.5.4"/>
<dbReference type="EMBL" id="U55873">
    <property type="protein sequence ID" value="AAB03991.1"/>
    <property type="molecule type" value="mRNA"/>
</dbReference>
<dbReference type="EMBL" id="D83378">
    <property type="protein sequence ID" value="BAA18951.1"/>
    <property type="molecule type" value="mRNA"/>
</dbReference>
<dbReference type="EMBL" id="AP005382">
    <property type="protein sequence ID" value="BAD54377.1"/>
    <property type="molecule type" value="Genomic_DNA"/>
</dbReference>
<dbReference type="EMBL" id="AP008212">
    <property type="protein sequence ID" value="BAF19254.1"/>
    <property type="molecule type" value="Genomic_DNA"/>
</dbReference>
<dbReference type="EMBL" id="AP014962">
    <property type="protein sequence ID" value="BAS97145.1"/>
    <property type="molecule type" value="Genomic_DNA"/>
</dbReference>
<dbReference type="EMBL" id="CM000143">
    <property type="protein sequence ID" value="EEE65484.1"/>
    <property type="molecule type" value="Genomic_DNA"/>
</dbReference>
<dbReference type="EMBL" id="AK100247">
    <property type="protein sequence ID" value="BAG94512.1"/>
    <property type="molecule type" value="mRNA"/>
</dbReference>
<dbReference type="PIR" id="T03602">
    <property type="entry name" value="T03602"/>
</dbReference>
<dbReference type="RefSeq" id="XP_015643183.1">
    <property type="nucleotide sequence ID" value="XM_015787697.1"/>
</dbReference>
<dbReference type="SMR" id="Q43011"/>
<dbReference type="FunCoup" id="Q43011">
    <property type="interactions" value="1590"/>
</dbReference>
<dbReference type="STRING" id="39947.Q43011"/>
<dbReference type="PaxDb" id="39947-Q43011"/>
<dbReference type="EnsemblPlants" id="Os06t0265000-01">
    <property type="protein sequence ID" value="Os06t0265000-01"/>
    <property type="gene ID" value="Os06g0265000"/>
</dbReference>
<dbReference type="Gramene" id="Os06t0265000-01">
    <property type="protein sequence ID" value="Os06t0265000-01"/>
    <property type="gene ID" value="Os06g0265000"/>
</dbReference>
<dbReference type="KEGG" id="dosa:Os06g0265000"/>
<dbReference type="eggNOG" id="KOG0571">
    <property type="taxonomic scope" value="Eukaryota"/>
</dbReference>
<dbReference type="HOGENOM" id="CLU_014658_2_2_1"/>
<dbReference type="InParanoid" id="Q43011"/>
<dbReference type="OMA" id="GIVCAFD"/>
<dbReference type="OrthoDB" id="409189at2759"/>
<dbReference type="BRENDA" id="6.3.5.4">
    <property type="organism ID" value="8948"/>
</dbReference>
<dbReference type="PlantReactome" id="R-OSA-1119354">
    <property type="pathway name" value="Asparagine biosynthesis III"/>
</dbReference>
<dbReference type="PlantReactome" id="R-OSA-1119495">
    <property type="pathway name" value="Citrulline biosynthesis"/>
</dbReference>
<dbReference type="PlantReactome" id="R-OSA-1119553">
    <property type="pathway name" value="Asparagine biosynthesis"/>
</dbReference>
<dbReference type="UniPathway" id="UPA00134">
    <property type="reaction ID" value="UER00195"/>
</dbReference>
<dbReference type="Proteomes" id="UP000000763">
    <property type="component" value="Chromosome 6"/>
</dbReference>
<dbReference type="Proteomes" id="UP000007752">
    <property type="component" value="Chromosome 6"/>
</dbReference>
<dbReference type="Proteomes" id="UP000059680">
    <property type="component" value="Chromosome 6"/>
</dbReference>
<dbReference type="ExpressionAtlas" id="Q43011">
    <property type="expression patterns" value="baseline and differential"/>
</dbReference>
<dbReference type="GO" id="GO:0005829">
    <property type="term" value="C:cytosol"/>
    <property type="evidence" value="ECO:0000318"/>
    <property type="project" value="GO_Central"/>
</dbReference>
<dbReference type="GO" id="GO:0004066">
    <property type="term" value="F:asparagine synthase (glutamine-hydrolyzing) activity"/>
    <property type="evidence" value="ECO:0000318"/>
    <property type="project" value="GO_Central"/>
</dbReference>
<dbReference type="GO" id="GO:0005524">
    <property type="term" value="F:ATP binding"/>
    <property type="evidence" value="ECO:0007669"/>
    <property type="project" value="UniProtKB-KW"/>
</dbReference>
<dbReference type="GO" id="GO:0006529">
    <property type="term" value="P:asparagine biosynthetic process"/>
    <property type="evidence" value="ECO:0000318"/>
    <property type="project" value="GO_Central"/>
</dbReference>
<dbReference type="GO" id="GO:0070981">
    <property type="term" value="P:L-asparagine biosynthetic process"/>
    <property type="evidence" value="ECO:0007669"/>
    <property type="project" value="UniProtKB-UniPathway"/>
</dbReference>
<dbReference type="CDD" id="cd01991">
    <property type="entry name" value="Asn_synthase_B_C"/>
    <property type="match status" value="1"/>
</dbReference>
<dbReference type="CDD" id="cd00712">
    <property type="entry name" value="AsnB"/>
    <property type="match status" value="1"/>
</dbReference>
<dbReference type="FunFam" id="3.40.50.620:FF:000055">
    <property type="entry name" value="Asparagine synthetase [glutamine-hydrolyzing]"/>
    <property type="match status" value="1"/>
</dbReference>
<dbReference type="FunFam" id="3.60.20.10:FF:000024">
    <property type="entry name" value="Asparagine synthetase [glutamine-hydrolyzing]"/>
    <property type="match status" value="1"/>
</dbReference>
<dbReference type="Gene3D" id="3.60.20.10">
    <property type="entry name" value="Glutamine Phosphoribosylpyrophosphate, subunit 1, domain 1"/>
    <property type="match status" value="1"/>
</dbReference>
<dbReference type="Gene3D" id="3.40.50.620">
    <property type="entry name" value="HUPs"/>
    <property type="match status" value="1"/>
</dbReference>
<dbReference type="InterPro" id="IPR006426">
    <property type="entry name" value="Asn_synth_AEB"/>
</dbReference>
<dbReference type="InterPro" id="IPR001962">
    <property type="entry name" value="Asn_synthase"/>
</dbReference>
<dbReference type="InterPro" id="IPR050795">
    <property type="entry name" value="Asn_Synthetase"/>
</dbReference>
<dbReference type="InterPro" id="IPR033738">
    <property type="entry name" value="AsnB_N"/>
</dbReference>
<dbReference type="InterPro" id="IPR017932">
    <property type="entry name" value="GATase_2_dom"/>
</dbReference>
<dbReference type="InterPro" id="IPR029055">
    <property type="entry name" value="Ntn_hydrolases_N"/>
</dbReference>
<dbReference type="InterPro" id="IPR014729">
    <property type="entry name" value="Rossmann-like_a/b/a_fold"/>
</dbReference>
<dbReference type="NCBIfam" id="TIGR01536">
    <property type="entry name" value="asn_synth_AEB"/>
    <property type="match status" value="1"/>
</dbReference>
<dbReference type="NCBIfam" id="NF006949">
    <property type="entry name" value="PRK09431.1"/>
    <property type="match status" value="1"/>
</dbReference>
<dbReference type="PANTHER" id="PTHR11772">
    <property type="entry name" value="ASPARAGINE SYNTHETASE"/>
    <property type="match status" value="1"/>
</dbReference>
<dbReference type="PANTHER" id="PTHR11772:SF2">
    <property type="entry name" value="ASPARAGINE SYNTHETASE [GLUTAMINE-HYDROLYZING]"/>
    <property type="match status" value="1"/>
</dbReference>
<dbReference type="Pfam" id="PF00733">
    <property type="entry name" value="Asn_synthase"/>
    <property type="match status" value="1"/>
</dbReference>
<dbReference type="Pfam" id="PF13537">
    <property type="entry name" value="GATase_7"/>
    <property type="match status" value="1"/>
</dbReference>
<dbReference type="PIRSF" id="PIRSF001589">
    <property type="entry name" value="Asn_synthetase_glu-h"/>
    <property type="match status" value="1"/>
</dbReference>
<dbReference type="SUPFAM" id="SSF52402">
    <property type="entry name" value="Adenine nucleotide alpha hydrolases-like"/>
    <property type="match status" value="1"/>
</dbReference>
<dbReference type="SUPFAM" id="SSF56235">
    <property type="entry name" value="N-terminal nucleophile aminohydrolases (Ntn hydrolases)"/>
    <property type="match status" value="1"/>
</dbReference>
<dbReference type="PROSITE" id="PS51278">
    <property type="entry name" value="GATASE_TYPE_2"/>
    <property type="match status" value="1"/>
</dbReference>
<sequence length="591" mass="66227">MCGILAVLGVADVSLAKRSRIIELSRRLRHRGPDWSGIHCYQDCYLAHQRLAIVDPTSGDQPLYNEDKSVVVTVNGEIYNHEELKANLKSHKFQTASDCEVIAHLYEEYGEEFVDMLDGMFAFVLLDTRDKSFIAARDAIGICPLYMGWGLDGSVWFSSEMKALSDDCERFISFPPGHLYSSKTGGLRRWYNPPWFSESIPSTPYNPLLLRQSFEKAIIKRLMTDVPFGVLLSGGLDSSLVASVVSRHLAEAKVAAQWGNKLHTFCIGLKGSPDLRAAKEVADYLGTVHHELHFTVQEGIDALEEVIYHVETYDVTTIRASTPMFLMSRKIKSLGVKMVLSGEGSDEIFGGYLYFHKAPNKKEFHEETCRKIKALHLYDCLRANKSTSAWGVEARVPFLDKNFINVAMDIDPEWKMIKRDLGRIEKWVLRNAFDDEEKPYLPKHILYRQKEQFSDGVGYSWIDGLKDHANEHVSDSMMMNASFVYPENTPVTKEAYYYRTIFEKFFPKNAARLTVPGGPSVACSTAKAVEWDAAWSKNLDPSGRAALGVHDAAYEDTLQKSPASANPVLDNGFGPALGESMVKTVASATAV</sequence>
<proteinExistence type="evidence at transcript level"/>
<reference key="1">
    <citation type="submission" date="1996-04" db="EMBL/GenBank/DDBJ databases">
        <authorList>
            <person name="Sueyoshi K."/>
            <person name="Kawachi T."/>
            <person name="Nakajima A."/>
            <person name="Yamagata H."/>
            <person name="Sugimoto T."/>
            <person name="Iwasaki T."/>
            <person name="Oji Y."/>
        </authorList>
    </citation>
    <scope>NUCLEOTIDE SEQUENCE [MRNA]</scope>
    <source>
        <strain>cv. Nipponbare</strain>
        <tissue>Callus</tissue>
    </source>
</reference>
<reference key="2">
    <citation type="online journal article" date="1996" name="Plant Gene Register">
        <title>Nucleotide sequence of cDNA encoding asparagine synthetase from rice callus.</title>
        <authorList>
            <person name="Watanabe K."/>
            <person name="Higuchi T."/>
            <person name="Sakai T."/>
            <person name="Yamaya T."/>
        </authorList>
        <locator>PGR96-020</locator>
    </citation>
    <scope>NUCLEOTIDE SEQUENCE [MRNA]</scope>
    <source>
        <strain>cv. Nipponbare</strain>
        <tissue>Callus</tissue>
    </source>
</reference>
<reference key="3">
    <citation type="journal article" date="2005" name="Nature">
        <title>The map-based sequence of the rice genome.</title>
        <authorList>
            <consortium name="International rice genome sequencing project (IRGSP)"/>
        </authorList>
    </citation>
    <scope>NUCLEOTIDE SEQUENCE [LARGE SCALE GENOMIC DNA]</scope>
    <source>
        <strain>cv. Nipponbare</strain>
    </source>
</reference>
<reference key="4">
    <citation type="journal article" date="2008" name="Nucleic Acids Res.">
        <title>The rice annotation project database (RAP-DB): 2008 update.</title>
        <authorList>
            <consortium name="The rice annotation project (RAP)"/>
        </authorList>
    </citation>
    <scope>GENOME REANNOTATION</scope>
    <source>
        <strain>cv. Nipponbare</strain>
    </source>
</reference>
<reference key="5">
    <citation type="journal article" date="2013" name="Rice">
        <title>Improvement of the Oryza sativa Nipponbare reference genome using next generation sequence and optical map data.</title>
        <authorList>
            <person name="Kawahara Y."/>
            <person name="de la Bastide M."/>
            <person name="Hamilton J.P."/>
            <person name="Kanamori H."/>
            <person name="McCombie W.R."/>
            <person name="Ouyang S."/>
            <person name="Schwartz D.C."/>
            <person name="Tanaka T."/>
            <person name="Wu J."/>
            <person name="Zhou S."/>
            <person name="Childs K.L."/>
            <person name="Davidson R.M."/>
            <person name="Lin H."/>
            <person name="Quesada-Ocampo L."/>
            <person name="Vaillancourt B."/>
            <person name="Sakai H."/>
            <person name="Lee S.S."/>
            <person name="Kim J."/>
            <person name="Numa H."/>
            <person name="Itoh T."/>
            <person name="Buell C.R."/>
            <person name="Matsumoto T."/>
        </authorList>
    </citation>
    <scope>GENOME REANNOTATION</scope>
    <source>
        <strain>cv. Nipponbare</strain>
    </source>
</reference>
<reference key="6">
    <citation type="journal article" date="2005" name="PLoS Biol.">
        <title>The genomes of Oryza sativa: a history of duplications.</title>
        <authorList>
            <person name="Yu J."/>
            <person name="Wang J."/>
            <person name="Lin W."/>
            <person name="Li S."/>
            <person name="Li H."/>
            <person name="Zhou J."/>
            <person name="Ni P."/>
            <person name="Dong W."/>
            <person name="Hu S."/>
            <person name="Zeng C."/>
            <person name="Zhang J."/>
            <person name="Zhang Y."/>
            <person name="Li R."/>
            <person name="Xu Z."/>
            <person name="Li S."/>
            <person name="Li X."/>
            <person name="Zheng H."/>
            <person name="Cong L."/>
            <person name="Lin L."/>
            <person name="Yin J."/>
            <person name="Geng J."/>
            <person name="Li G."/>
            <person name="Shi J."/>
            <person name="Liu J."/>
            <person name="Lv H."/>
            <person name="Li J."/>
            <person name="Wang J."/>
            <person name="Deng Y."/>
            <person name="Ran L."/>
            <person name="Shi X."/>
            <person name="Wang X."/>
            <person name="Wu Q."/>
            <person name="Li C."/>
            <person name="Ren X."/>
            <person name="Wang J."/>
            <person name="Wang X."/>
            <person name="Li D."/>
            <person name="Liu D."/>
            <person name="Zhang X."/>
            <person name="Ji Z."/>
            <person name="Zhao W."/>
            <person name="Sun Y."/>
            <person name="Zhang Z."/>
            <person name="Bao J."/>
            <person name="Han Y."/>
            <person name="Dong L."/>
            <person name="Ji J."/>
            <person name="Chen P."/>
            <person name="Wu S."/>
            <person name="Liu J."/>
            <person name="Xiao Y."/>
            <person name="Bu D."/>
            <person name="Tan J."/>
            <person name="Yang L."/>
            <person name="Ye C."/>
            <person name="Zhang J."/>
            <person name="Xu J."/>
            <person name="Zhou Y."/>
            <person name="Yu Y."/>
            <person name="Zhang B."/>
            <person name="Zhuang S."/>
            <person name="Wei H."/>
            <person name="Liu B."/>
            <person name="Lei M."/>
            <person name="Yu H."/>
            <person name="Li Y."/>
            <person name="Xu H."/>
            <person name="Wei S."/>
            <person name="He X."/>
            <person name="Fang L."/>
            <person name="Zhang Z."/>
            <person name="Zhang Y."/>
            <person name="Huang X."/>
            <person name="Su Z."/>
            <person name="Tong W."/>
            <person name="Li J."/>
            <person name="Tong Z."/>
            <person name="Li S."/>
            <person name="Ye J."/>
            <person name="Wang L."/>
            <person name="Fang L."/>
            <person name="Lei T."/>
            <person name="Chen C.-S."/>
            <person name="Chen H.-C."/>
            <person name="Xu Z."/>
            <person name="Li H."/>
            <person name="Huang H."/>
            <person name="Zhang F."/>
            <person name="Xu H."/>
            <person name="Li N."/>
            <person name="Zhao C."/>
            <person name="Li S."/>
            <person name="Dong L."/>
            <person name="Huang Y."/>
            <person name="Li L."/>
            <person name="Xi Y."/>
            <person name="Qi Q."/>
            <person name="Li W."/>
            <person name="Zhang B."/>
            <person name="Hu W."/>
            <person name="Zhang Y."/>
            <person name="Tian X."/>
            <person name="Jiao Y."/>
            <person name="Liang X."/>
            <person name="Jin J."/>
            <person name="Gao L."/>
            <person name="Zheng W."/>
            <person name="Hao B."/>
            <person name="Liu S.-M."/>
            <person name="Wang W."/>
            <person name="Yuan L."/>
            <person name="Cao M."/>
            <person name="McDermott J."/>
            <person name="Samudrala R."/>
            <person name="Wang J."/>
            <person name="Wong G.K.-S."/>
            <person name="Yang H."/>
        </authorList>
    </citation>
    <scope>NUCLEOTIDE SEQUENCE [LARGE SCALE GENOMIC DNA]</scope>
    <source>
        <strain>cv. Nipponbare</strain>
    </source>
</reference>
<reference key="7">
    <citation type="journal article" date="2003" name="Science">
        <title>Collection, mapping, and annotation of over 28,000 cDNA clones from japonica rice.</title>
        <authorList>
            <consortium name="The rice full-length cDNA consortium"/>
        </authorList>
    </citation>
    <scope>NUCLEOTIDE SEQUENCE [LARGE SCALE MRNA]</scope>
    <source>
        <strain>cv. Nipponbare</strain>
    </source>
</reference>
<reference key="8">
    <citation type="journal article" date="2000" name="Plant Cell Physiol.">
        <title>Organ and cellular localization of asparagine synthetase in rice plants.</title>
        <authorList>
            <person name="Nakano K."/>
            <person name="Suzuki T."/>
            <person name="Hayakawa T."/>
            <person name="Yamaya T."/>
        </authorList>
    </citation>
    <scope>TISSUE SPECIFICITY</scope>
</reference>
<evidence type="ECO:0000250" key="1"/>
<evidence type="ECO:0000255" key="2">
    <source>
        <dbReference type="PROSITE-ProRule" id="PRU00609"/>
    </source>
</evidence>
<evidence type="ECO:0000269" key="3">
    <source>
    </source>
</evidence>
<keyword id="KW-0028">Amino-acid biosynthesis</keyword>
<keyword id="KW-0061">Asparagine biosynthesis</keyword>
<keyword id="KW-0067">ATP-binding</keyword>
<keyword id="KW-0315">Glutamine amidotransferase</keyword>
<keyword id="KW-0436">Ligase</keyword>
<keyword id="KW-0547">Nucleotide-binding</keyword>
<keyword id="KW-1185">Reference proteome</keyword>
<organism>
    <name type="scientific">Oryza sativa subsp. japonica</name>
    <name type="common">Rice</name>
    <dbReference type="NCBI Taxonomy" id="39947"/>
    <lineage>
        <taxon>Eukaryota</taxon>
        <taxon>Viridiplantae</taxon>
        <taxon>Streptophyta</taxon>
        <taxon>Embryophyta</taxon>
        <taxon>Tracheophyta</taxon>
        <taxon>Spermatophyta</taxon>
        <taxon>Magnoliopsida</taxon>
        <taxon>Liliopsida</taxon>
        <taxon>Poales</taxon>
        <taxon>Poaceae</taxon>
        <taxon>BOP clade</taxon>
        <taxon>Oryzoideae</taxon>
        <taxon>Oryzeae</taxon>
        <taxon>Oryzinae</taxon>
        <taxon>Oryza</taxon>
        <taxon>Oryza sativa</taxon>
    </lineage>
</organism>
<feature type="initiator methionine" description="Removed" evidence="1">
    <location>
        <position position="1"/>
    </location>
</feature>
<feature type="chain" id="PRO_0000056925" description="Asparagine synthetase [glutamine-hydrolyzing] 2">
    <location>
        <begin position="2"/>
        <end position="591"/>
    </location>
</feature>
<feature type="domain" description="Glutamine amidotransferase type-2" evidence="2">
    <location>
        <begin position="2"/>
        <end position="185"/>
    </location>
</feature>
<feature type="domain" description="Asparagine synthetase">
    <location>
        <begin position="193"/>
        <end position="516"/>
    </location>
</feature>
<feature type="active site" description="For GATase activity" evidence="1">
    <location>
        <position position="2"/>
    </location>
</feature>
<feature type="binding site" evidence="1">
    <location>
        <begin position="50"/>
        <end position="54"/>
    </location>
    <ligand>
        <name>L-glutamine</name>
        <dbReference type="ChEBI" id="CHEBI:58359"/>
    </ligand>
</feature>
<feature type="binding site" evidence="1">
    <location>
        <begin position="75"/>
        <end position="77"/>
    </location>
    <ligand>
        <name>L-glutamine</name>
        <dbReference type="ChEBI" id="CHEBI:58359"/>
    </ligand>
</feature>
<feature type="binding site" evidence="1">
    <location>
        <position position="98"/>
    </location>
    <ligand>
        <name>L-glutamine</name>
        <dbReference type="ChEBI" id="CHEBI:58359"/>
    </ligand>
</feature>
<feature type="binding site" evidence="1">
    <location>
        <position position="231"/>
    </location>
    <ligand>
        <name>ATP</name>
        <dbReference type="ChEBI" id="CHEBI:30616"/>
    </ligand>
</feature>
<feature type="binding site" evidence="1">
    <location>
        <position position="267"/>
    </location>
    <ligand>
        <name>ATP</name>
        <dbReference type="ChEBI" id="CHEBI:30616"/>
    </ligand>
</feature>
<feature type="binding site" evidence="1">
    <location>
        <begin position="341"/>
        <end position="342"/>
    </location>
    <ligand>
        <name>ATP</name>
        <dbReference type="ChEBI" id="CHEBI:30616"/>
    </ligand>
</feature>
<feature type="site" description="Important for beta-aspartyl-AMP intermediate formation" evidence="1">
    <location>
        <position position="343"/>
    </location>
</feature>
<accession>Q43011</accession>
<accession>Q0DD19</accession>
<accession>Q5Z6P2</accession>
<comment type="function">
    <text evidence="1">Essential for nitrogen assimilation, distribution and remobilization within the plant via the phloem.</text>
</comment>
<comment type="catalytic activity">
    <reaction>
        <text>L-aspartate + L-glutamine + ATP + H2O = L-asparagine + L-glutamate + AMP + diphosphate + H(+)</text>
        <dbReference type="Rhea" id="RHEA:12228"/>
        <dbReference type="ChEBI" id="CHEBI:15377"/>
        <dbReference type="ChEBI" id="CHEBI:15378"/>
        <dbReference type="ChEBI" id="CHEBI:29985"/>
        <dbReference type="ChEBI" id="CHEBI:29991"/>
        <dbReference type="ChEBI" id="CHEBI:30616"/>
        <dbReference type="ChEBI" id="CHEBI:33019"/>
        <dbReference type="ChEBI" id="CHEBI:58048"/>
        <dbReference type="ChEBI" id="CHEBI:58359"/>
        <dbReference type="ChEBI" id="CHEBI:456215"/>
        <dbReference type="EC" id="6.3.5.4"/>
    </reaction>
</comment>
<comment type="pathway">
    <text>Amino-acid biosynthesis; L-asparagine biosynthesis; L-asparagine from L-aspartate (L-Gln route): step 1/1.</text>
</comment>
<comment type="tissue specificity">
    <text evidence="3">Expressed in companion cells of leaf sheath vascular bundles, and phloem-parenchyma cells, nucellar projections and nucellar epidermis of dorsal vascular bundles of grains.</text>
</comment>
<gene>
    <name type="ordered locus">Os06g0265000</name>
    <name type="ordered locus">LOC_Os06g15420</name>
    <name type="ORF">OJ1001_B06.12</name>
</gene>
<name>ASNS2_ORYSJ</name>
<protein>
    <recommendedName>
        <fullName>Asparagine synthetase [glutamine-hydrolyzing] 2</fullName>
        <ecNumber>6.3.5.4</ecNumber>
    </recommendedName>
    <alternativeName>
        <fullName>Glutamine-dependent asparagine synthetase 2</fullName>
    </alternativeName>
</protein>